<organism>
    <name type="scientific">Brachypodium distachyon</name>
    <name type="common">Purple false brome</name>
    <name type="synonym">Trachynia distachya</name>
    <dbReference type="NCBI Taxonomy" id="15368"/>
    <lineage>
        <taxon>Eukaryota</taxon>
        <taxon>Viridiplantae</taxon>
        <taxon>Streptophyta</taxon>
        <taxon>Embryophyta</taxon>
        <taxon>Tracheophyta</taxon>
        <taxon>Spermatophyta</taxon>
        <taxon>Magnoliopsida</taxon>
        <taxon>Liliopsida</taxon>
        <taxon>Poales</taxon>
        <taxon>Poaceae</taxon>
        <taxon>BOP clade</taxon>
        <taxon>Pooideae</taxon>
        <taxon>Stipodae</taxon>
        <taxon>Brachypodieae</taxon>
        <taxon>Brachypodium</taxon>
    </lineage>
</organism>
<name>NU4LC_BRADI</name>
<feature type="chain" id="PRO_0000360308" description="NAD(P)H-quinone oxidoreductase subunit 4L, chloroplastic">
    <location>
        <begin position="1"/>
        <end position="101"/>
    </location>
</feature>
<feature type="transmembrane region" description="Helical" evidence="1">
    <location>
        <begin position="2"/>
        <end position="22"/>
    </location>
</feature>
<feature type="transmembrane region" description="Helical" evidence="1">
    <location>
        <begin position="32"/>
        <end position="52"/>
    </location>
</feature>
<feature type="transmembrane region" description="Helical" evidence="1">
    <location>
        <begin position="61"/>
        <end position="81"/>
    </location>
</feature>
<dbReference type="EC" id="7.1.1.-" evidence="1"/>
<dbReference type="EMBL" id="EU325680">
    <property type="protein sequence ID" value="ACF08689.1"/>
    <property type="molecule type" value="Genomic_DNA"/>
</dbReference>
<dbReference type="RefSeq" id="YP_002000537.1">
    <property type="nucleotide sequence ID" value="NC_011032.1"/>
</dbReference>
<dbReference type="SMR" id="B3TNA1"/>
<dbReference type="FunCoup" id="B3TNA1">
    <property type="interactions" value="28"/>
</dbReference>
<dbReference type="STRING" id="15368.B3TNA1"/>
<dbReference type="GeneID" id="6439824"/>
<dbReference type="KEGG" id="bdi:6439824"/>
<dbReference type="InParanoid" id="B3TNA1"/>
<dbReference type="Proteomes" id="UP000008810">
    <property type="component" value="Chloroplast"/>
</dbReference>
<dbReference type="ExpressionAtlas" id="B3TNA1">
    <property type="expression patterns" value="baseline"/>
</dbReference>
<dbReference type="GO" id="GO:0009535">
    <property type="term" value="C:chloroplast thylakoid membrane"/>
    <property type="evidence" value="ECO:0007669"/>
    <property type="project" value="UniProtKB-SubCell"/>
</dbReference>
<dbReference type="GO" id="GO:0030964">
    <property type="term" value="C:NADH dehydrogenase complex"/>
    <property type="evidence" value="ECO:0000318"/>
    <property type="project" value="GO_Central"/>
</dbReference>
<dbReference type="GO" id="GO:0016655">
    <property type="term" value="F:oxidoreductase activity, acting on NAD(P)H, quinone or similar compound as acceptor"/>
    <property type="evidence" value="ECO:0007669"/>
    <property type="project" value="UniProtKB-UniRule"/>
</dbReference>
<dbReference type="GO" id="GO:0048038">
    <property type="term" value="F:quinone binding"/>
    <property type="evidence" value="ECO:0007669"/>
    <property type="project" value="UniProtKB-KW"/>
</dbReference>
<dbReference type="GO" id="GO:0042773">
    <property type="term" value="P:ATP synthesis coupled electron transport"/>
    <property type="evidence" value="ECO:0007669"/>
    <property type="project" value="InterPro"/>
</dbReference>
<dbReference type="GO" id="GO:0019684">
    <property type="term" value="P:photosynthesis, light reaction"/>
    <property type="evidence" value="ECO:0007669"/>
    <property type="project" value="UniProtKB-UniRule"/>
</dbReference>
<dbReference type="FunFam" id="1.10.287.3510:FF:000001">
    <property type="entry name" value="NADH-quinone oxidoreductase subunit K"/>
    <property type="match status" value="1"/>
</dbReference>
<dbReference type="Gene3D" id="1.10.287.3510">
    <property type="match status" value="1"/>
</dbReference>
<dbReference type="HAMAP" id="MF_01456">
    <property type="entry name" value="NDH1_NuoK"/>
    <property type="match status" value="1"/>
</dbReference>
<dbReference type="InterPro" id="IPR001133">
    <property type="entry name" value="NADH_UbQ_OxRdtase_chain4L/K"/>
</dbReference>
<dbReference type="InterPro" id="IPR039428">
    <property type="entry name" value="NUOK/Mnh_C1-like"/>
</dbReference>
<dbReference type="NCBIfam" id="NF004320">
    <property type="entry name" value="PRK05715.1-2"/>
    <property type="match status" value="1"/>
</dbReference>
<dbReference type="PANTHER" id="PTHR11434:SF16">
    <property type="entry name" value="NADH-UBIQUINONE OXIDOREDUCTASE CHAIN 4L"/>
    <property type="match status" value="1"/>
</dbReference>
<dbReference type="PANTHER" id="PTHR11434">
    <property type="entry name" value="NADH-UBIQUINONE OXIDOREDUCTASE SUBUNIT ND4L"/>
    <property type="match status" value="1"/>
</dbReference>
<dbReference type="Pfam" id="PF00420">
    <property type="entry name" value="Oxidored_q2"/>
    <property type="match status" value="1"/>
</dbReference>
<comment type="function">
    <text evidence="1">NDH shuttles electrons from NAD(P)H:plastoquinone, via FMN and iron-sulfur (Fe-S) centers, to quinones in the photosynthetic chain and possibly in a chloroplast respiratory chain. The immediate electron acceptor for the enzyme in this species is believed to be plastoquinone. Couples the redox reaction to proton translocation, and thus conserves the redox energy in a proton gradient.</text>
</comment>
<comment type="catalytic activity">
    <reaction evidence="1">
        <text>a plastoquinone + NADH + (n+1) H(+)(in) = a plastoquinol + NAD(+) + n H(+)(out)</text>
        <dbReference type="Rhea" id="RHEA:42608"/>
        <dbReference type="Rhea" id="RHEA-COMP:9561"/>
        <dbReference type="Rhea" id="RHEA-COMP:9562"/>
        <dbReference type="ChEBI" id="CHEBI:15378"/>
        <dbReference type="ChEBI" id="CHEBI:17757"/>
        <dbReference type="ChEBI" id="CHEBI:57540"/>
        <dbReference type="ChEBI" id="CHEBI:57945"/>
        <dbReference type="ChEBI" id="CHEBI:62192"/>
    </reaction>
</comment>
<comment type="catalytic activity">
    <reaction evidence="1">
        <text>a plastoquinone + NADPH + (n+1) H(+)(in) = a plastoquinol + NADP(+) + n H(+)(out)</text>
        <dbReference type="Rhea" id="RHEA:42612"/>
        <dbReference type="Rhea" id="RHEA-COMP:9561"/>
        <dbReference type="Rhea" id="RHEA-COMP:9562"/>
        <dbReference type="ChEBI" id="CHEBI:15378"/>
        <dbReference type="ChEBI" id="CHEBI:17757"/>
        <dbReference type="ChEBI" id="CHEBI:57783"/>
        <dbReference type="ChEBI" id="CHEBI:58349"/>
        <dbReference type="ChEBI" id="CHEBI:62192"/>
    </reaction>
</comment>
<comment type="subunit">
    <text evidence="1">NDH is composed of at least 16 different subunits, 5 of which are encoded in the nucleus.</text>
</comment>
<comment type="subcellular location">
    <subcellularLocation>
        <location evidence="1">Plastid</location>
        <location evidence="1">Chloroplast thylakoid membrane</location>
        <topology evidence="1">Multi-pass membrane protein</topology>
    </subcellularLocation>
</comment>
<comment type="similarity">
    <text evidence="1">Belongs to the complex I subunit 4L family.</text>
</comment>
<geneLocation type="chloroplast"/>
<sequence>MMFEHVLFLSVYLFSIGIYGLITSRNMVRALICLELILNSINLNLVTFSDLFDSRQLKGDIFAIFVIALAAAEAAIGLSILSSIHRNRKSTRINQSNFLNN</sequence>
<evidence type="ECO:0000255" key="1">
    <source>
        <dbReference type="HAMAP-Rule" id="MF_01456"/>
    </source>
</evidence>
<protein>
    <recommendedName>
        <fullName evidence="1">NAD(P)H-quinone oxidoreductase subunit 4L, chloroplastic</fullName>
        <ecNumber evidence="1">7.1.1.-</ecNumber>
    </recommendedName>
    <alternativeName>
        <fullName evidence="1">NAD(P)H dehydrogenase subunit 4L</fullName>
    </alternativeName>
    <alternativeName>
        <fullName evidence="1">NADH-plastoquinone oxidoreductase subunit 4L</fullName>
    </alternativeName>
</protein>
<keyword id="KW-0150">Chloroplast</keyword>
<keyword id="KW-0472">Membrane</keyword>
<keyword id="KW-0520">NAD</keyword>
<keyword id="KW-0521">NADP</keyword>
<keyword id="KW-0934">Plastid</keyword>
<keyword id="KW-0618">Plastoquinone</keyword>
<keyword id="KW-0874">Quinone</keyword>
<keyword id="KW-1185">Reference proteome</keyword>
<keyword id="KW-0793">Thylakoid</keyword>
<keyword id="KW-1278">Translocase</keyword>
<keyword id="KW-0812">Transmembrane</keyword>
<keyword id="KW-1133">Transmembrane helix</keyword>
<keyword id="KW-0813">Transport</keyword>
<reference key="1">
    <citation type="journal article" date="2008" name="BMC Res. Notes">
        <title>The complete chloroplast genome sequence of Brachypodium distachyon: sequence comparison and phylogenetic analysis of eight grass plastomes.</title>
        <authorList>
            <person name="Bortiri E."/>
            <person name="Coleman-Derr D."/>
            <person name="Lazo G.R."/>
            <person name="Anderson O.D."/>
            <person name="Gu Y.Q."/>
        </authorList>
    </citation>
    <scope>NUCLEOTIDE SEQUENCE [LARGE SCALE GENOMIC DNA]</scope>
    <source>
        <strain>cv. Bd21</strain>
    </source>
</reference>
<gene>
    <name evidence="1" type="primary">ndhE</name>
</gene>
<proteinExistence type="inferred from homology"/>
<accession>B3TNA1</accession>